<accession>Q7VN20</accession>
<evidence type="ECO:0000250" key="1"/>
<evidence type="ECO:0000255" key="2">
    <source>
        <dbReference type="HAMAP-Rule" id="MF_00340"/>
    </source>
</evidence>
<evidence type="ECO:0000256" key="3">
    <source>
        <dbReference type="SAM" id="MobiDB-lite"/>
    </source>
</evidence>
<evidence type="ECO:0000305" key="4"/>
<keyword id="KW-1185">Reference proteome</keyword>
<keyword id="KW-0687">Ribonucleoprotein</keyword>
<keyword id="KW-0689">Ribosomal protein</keyword>
<proteinExistence type="inferred from homology"/>
<protein>
    <recommendedName>
        <fullName evidence="2">Large ribosomal subunit protein bL32</fullName>
    </recommendedName>
    <alternativeName>
        <fullName evidence="4">50S ribosomal protein L32</fullName>
    </alternativeName>
</protein>
<gene>
    <name evidence="2" type="primary">rpmF</name>
    <name type="ordered locus">HD_0772</name>
</gene>
<feature type="initiator methionine" description="Removed" evidence="1">
    <location>
        <position position="1"/>
    </location>
</feature>
<feature type="chain" id="PRO_0000172345" description="Large ribosomal subunit protein bL32">
    <location>
        <begin position="2"/>
        <end position="56"/>
    </location>
</feature>
<feature type="region of interest" description="Disordered" evidence="3">
    <location>
        <begin position="1"/>
        <end position="37"/>
    </location>
</feature>
<feature type="compositionally biased region" description="Basic residues" evidence="3">
    <location>
        <begin position="7"/>
        <end position="16"/>
    </location>
</feature>
<dbReference type="EMBL" id="AE017143">
    <property type="protein sequence ID" value="AAP95677.1"/>
    <property type="molecule type" value="Genomic_DNA"/>
</dbReference>
<dbReference type="RefSeq" id="WP_005598552.1">
    <property type="nucleotide sequence ID" value="NC_002940.2"/>
</dbReference>
<dbReference type="SMR" id="Q7VN20"/>
<dbReference type="STRING" id="233412.HD_0772"/>
<dbReference type="GeneID" id="92744027"/>
<dbReference type="KEGG" id="hdu:HD_0772"/>
<dbReference type="eggNOG" id="COG0333">
    <property type="taxonomic scope" value="Bacteria"/>
</dbReference>
<dbReference type="HOGENOM" id="CLU_129084_2_1_6"/>
<dbReference type="OrthoDB" id="9801927at2"/>
<dbReference type="Proteomes" id="UP000001022">
    <property type="component" value="Chromosome"/>
</dbReference>
<dbReference type="GO" id="GO:0015934">
    <property type="term" value="C:large ribosomal subunit"/>
    <property type="evidence" value="ECO:0007669"/>
    <property type="project" value="InterPro"/>
</dbReference>
<dbReference type="GO" id="GO:0003735">
    <property type="term" value="F:structural constituent of ribosome"/>
    <property type="evidence" value="ECO:0007669"/>
    <property type="project" value="InterPro"/>
</dbReference>
<dbReference type="GO" id="GO:0006412">
    <property type="term" value="P:translation"/>
    <property type="evidence" value="ECO:0007669"/>
    <property type="project" value="UniProtKB-UniRule"/>
</dbReference>
<dbReference type="Gene3D" id="1.20.5.640">
    <property type="entry name" value="Single helix bin"/>
    <property type="match status" value="1"/>
</dbReference>
<dbReference type="HAMAP" id="MF_00340">
    <property type="entry name" value="Ribosomal_bL32"/>
    <property type="match status" value="1"/>
</dbReference>
<dbReference type="InterPro" id="IPR002677">
    <property type="entry name" value="Ribosomal_bL32"/>
</dbReference>
<dbReference type="InterPro" id="IPR044957">
    <property type="entry name" value="Ribosomal_bL32_bact"/>
</dbReference>
<dbReference type="InterPro" id="IPR011332">
    <property type="entry name" value="Ribosomal_zn-bd"/>
</dbReference>
<dbReference type="NCBIfam" id="TIGR01031">
    <property type="entry name" value="rpmF_bact"/>
    <property type="match status" value="1"/>
</dbReference>
<dbReference type="PANTHER" id="PTHR35534">
    <property type="entry name" value="50S RIBOSOMAL PROTEIN L32"/>
    <property type="match status" value="1"/>
</dbReference>
<dbReference type="PANTHER" id="PTHR35534:SF1">
    <property type="entry name" value="LARGE RIBOSOMAL SUBUNIT PROTEIN BL32"/>
    <property type="match status" value="1"/>
</dbReference>
<dbReference type="Pfam" id="PF01783">
    <property type="entry name" value="Ribosomal_L32p"/>
    <property type="match status" value="1"/>
</dbReference>
<dbReference type="SUPFAM" id="SSF57829">
    <property type="entry name" value="Zn-binding ribosomal proteins"/>
    <property type="match status" value="1"/>
</dbReference>
<reference key="1">
    <citation type="submission" date="2003-06" db="EMBL/GenBank/DDBJ databases">
        <title>The complete genome sequence of Haemophilus ducreyi.</title>
        <authorList>
            <person name="Munson R.S. Jr."/>
            <person name="Ray W.C."/>
            <person name="Mahairas G."/>
            <person name="Sabo P."/>
            <person name="Mungur R."/>
            <person name="Johnson L."/>
            <person name="Nguyen D."/>
            <person name="Wang J."/>
            <person name="Forst C."/>
            <person name="Hood L."/>
        </authorList>
    </citation>
    <scope>NUCLEOTIDE SEQUENCE [LARGE SCALE GENOMIC DNA]</scope>
    <source>
        <strain>35000HP / ATCC 700724</strain>
    </source>
</reference>
<name>RL32_HAEDU</name>
<sequence>MAVQQNKKSRSRRDMRRSHDALTTAAVSVDKTTGETHLRHHVTADGYYRGRKVINK</sequence>
<comment type="similarity">
    <text evidence="2">Belongs to the bacterial ribosomal protein bL32 family.</text>
</comment>
<organism>
    <name type="scientific">Haemophilus ducreyi (strain 35000HP / ATCC 700724)</name>
    <dbReference type="NCBI Taxonomy" id="233412"/>
    <lineage>
        <taxon>Bacteria</taxon>
        <taxon>Pseudomonadati</taxon>
        <taxon>Pseudomonadota</taxon>
        <taxon>Gammaproteobacteria</taxon>
        <taxon>Pasteurellales</taxon>
        <taxon>Pasteurellaceae</taxon>
        <taxon>Haemophilus</taxon>
    </lineage>
</organism>